<comment type="function">
    <text evidence="1">Catalyzes the S-adenosylmethionine monomethyl esterification of trans-aconitate.</text>
</comment>
<comment type="catalytic activity">
    <reaction evidence="1">
        <text>trans-aconitate + S-adenosyl-L-methionine = (E)-3-(methoxycarbonyl)pent-2-enedioate + S-adenosyl-L-homocysteine</text>
        <dbReference type="Rhea" id="RHEA:14969"/>
        <dbReference type="ChEBI" id="CHEBI:15708"/>
        <dbReference type="ChEBI" id="CHEBI:57470"/>
        <dbReference type="ChEBI" id="CHEBI:57856"/>
        <dbReference type="ChEBI" id="CHEBI:59789"/>
        <dbReference type="EC" id="2.1.1.144"/>
    </reaction>
</comment>
<comment type="subcellular location">
    <subcellularLocation>
        <location evidence="1">Cytoplasm</location>
    </subcellularLocation>
</comment>
<comment type="similarity">
    <text evidence="1">Belongs to the methyltransferase superfamily. Tam family.</text>
</comment>
<sequence length="252" mass="28945">MSDWNPSLYLHFAAERSRPAVELLARVPLENIEYIADLGCGPGNSTALLDQRWPAARITGIDSSPAMIAEARSALPDCLFVEADIRNWQPEQALDLIFANASLQWLPDHYELFPHLVSLLSPLGVLAVQMPDNWLEPTHVLMREVAWEQNYPDRGREPLAGVHAYYDILSEAGCEVDIWRTTYYHQMPSHQAIIDWVTATGLRPWLQDLTESEQQHFLTRYHQMLEEQYPLQENGQILLAFPRLFIVARRTE</sequence>
<organism>
    <name type="scientific">Escherichia coli O6:K15:H31 (strain 536 / UPEC)</name>
    <dbReference type="NCBI Taxonomy" id="362663"/>
    <lineage>
        <taxon>Bacteria</taxon>
        <taxon>Pseudomonadati</taxon>
        <taxon>Pseudomonadota</taxon>
        <taxon>Gammaproteobacteria</taxon>
        <taxon>Enterobacterales</taxon>
        <taxon>Enterobacteriaceae</taxon>
        <taxon>Escherichia</taxon>
    </lineage>
</organism>
<proteinExistence type="inferred from homology"/>
<name>TAM_ECOL5</name>
<gene>
    <name evidence="1" type="primary">tam</name>
    <name type="ordered locus">ECP_1503</name>
</gene>
<reference key="1">
    <citation type="journal article" date="2006" name="Mol. Microbiol.">
        <title>Role of pathogenicity island-associated integrases in the genome plasticity of uropathogenic Escherichia coli strain 536.</title>
        <authorList>
            <person name="Hochhut B."/>
            <person name="Wilde C."/>
            <person name="Balling G."/>
            <person name="Middendorf B."/>
            <person name="Dobrindt U."/>
            <person name="Brzuszkiewicz E."/>
            <person name="Gottschalk G."/>
            <person name="Carniel E."/>
            <person name="Hacker J."/>
        </authorList>
    </citation>
    <scope>NUCLEOTIDE SEQUENCE [LARGE SCALE GENOMIC DNA]</scope>
    <source>
        <strain>536 / UPEC</strain>
    </source>
</reference>
<keyword id="KW-0963">Cytoplasm</keyword>
<keyword id="KW-0489">Methyltransferase</keyword>
<keyword id="KW-0949">S-adenosyl-L-methionine</keyword>
<keyword id="KW-0808">Transferase</keyword>
<feature type="chain" id="PRO_1000056557" description="Trans-aconitate 2-methyltransferase">
    <location>
        <begin position="1"/>
        <end position="252"/>
    </location>
</feature>
<accession>Q0THR9</accession>
<evidence type="ECO:0000255" key="1">
    <source>
        <dbReference type="HAMAP-Rule" id="MF_00560"/>
    </source>
</evidence>
<protein>
    <recommendedName>
        <fullName evidence="1">Trans-aconitate 2-methyltransferase</fullName>
        <ecNumber evidence="1">2.1.1.144</ecNumber>
    </recommendedName>
</protein>
<dbReference type="EC" id="2.1.1.144" evidence="1"/>
<dbReference type="EMBL" id="CP000247">
    <property type="protein sequence ID" value="ABG69510.1"/>
    <property type="molecule type" value="Genomic_DNA"/>
</dbReference>
<dbReference type="RefSeq" id="WP_001286538.1">
    <property type="nucleotide sequence ID" value="NC_008253.1"/>
</dbReference>
<dbReference type="SMR" id="Q0THR9"/>
<dbReference type="KEGG" id="ecp:ECP_1503"/>
<dbReference type="HOGENOM" id="CLU_037990_5_2_6"/>
<dbReference type="Proteomes" id="UP000009182">
    <property type="component" value="Chromosome"/>
</dbReference>
<dbReference type="GO" id="GO:0005737">
    <property type="term" value="C:cytoplasm"/>
    <property type="evidence" value="ECO:0007669"/>
    <property type="project" value="UniProtKB-SubCell"/>
</dbReference>
<dbReference type="GO" id="GO:0030798">
    <property type="term" value="F:trans-aconitate 2-methyltransferase activity"/>
    <property type="evidence" value="ECO:0007669"/>
    <property type="project" value="UniProtKB-UniRule"/>
</dbReference>
<dbReference type="GO" id="GO:0032259">
    <property type="term" value="P:methylation"/>
    <property type="evidence" value="ECO:0007669"/>
    <property type="project" value="UniProtKB-KW"/>
</dbReference>
<dbReference type="CDD" id="cd02440">
    <property type="entry name" value="AdoMet_MTases"/>
    <property type="match status" value="1"/>
</dbReference>
<dbReference type="Gene3D" id="1.10.150.290">
    <property type="entry name" value="S-adenosyl-L-methionine-dependent methyltransferases"/>
    <property type="match status" value="1"/>
</dbReference>
<dbReference type="Gene3D" id="3.40.50.150">
    <property type="entry name" value="Vaccinia Virus protein VP39"/>
    <property type="match status" value="1"/>
</dbReference>
<dbReference type="HAMAP" id="MF_00560">
    <property type="entry name" value="Tran_acon_Me_trans"/>
    <property type="match status" value="1"/>
</dbReference>
<dbReference type="InterPro" id="IPR041698">
    <property type="entry name" value="Methyltransf_25"/>
</dbReference>
<dbReference type="InterPro" id="IPR029063">
    <property type="entry name" value="SAM-dependent_MTases_sf"/>
</dbReference>
<dbReference type="InterPro" id="IPR023506">
    <property type="entry name" value="Trans-aconitate_MeTrfase"/>
</dbReference>
<dbReference type="InterPro" id="IPR023149">
    <property type="entry name" value="Trans_acon_MeTrfase_C"/>
</dbReference>
<dbReference type="NCBIfam" id="NF002463">
    <property type="entry name" value="PRK01683.1"/>
    <property type="match status" value="1"/>
</dbReference>
<dbReference type="PANTHER" id="PTHR43861:SF1">
    <property type="entry name" value="TRANS-ACONITATE 2-METHYLTRANSFERASE"/>
    <property type="match status" value="1"/>
</dbReference>
<dbReference type="PANTHER" id="PTHR43861">
    <property type="entry name" value="TRANS-ACONITATE 2-METHYLTRANSFERASE-RELATED"/>
    <property type="match status" value="1"/>
</dbReference>
<dbReference type="Pfam" id="PF13649">
    <property type="entry name" value="Methyltransf_25"/>
    <property type="match status" value="1"/>
</dbReference>
<dbReference type="SUPFAM" id="SSF53335">
    <property type="entry name" value="S-adenosyl-L-methionine-dependent methyltransferases"/>
    <property type="match status" value="1"/>
</dbReference>